<proteinExistence type="evidence at protein level"/>
<feature type="chain" id="PRO_0000154993" description="DNA-binding protein HMt-2">
    <location>
        <begin position="1"/>
        <end position="67"/>
    </location>
</feature>
<feature type="region of interest" description="Interaction with DNA" evidence="1">
    <location>
        <begin position="53"/>
        <end position="56"/>
    </location>
</feature>
<feature type="site" description="Interaction with DNA" evidence="1">
    <location>
        <position position="13"/>
    </location>
</feature>
<dbReference type="EMBL" id="M86663">
    <property type="protein sequence ID" value="AAA73196.1"/>
    <property type="molecule type" value="Genomic_DNA"/>
</dbReference>
<dbReference type="EMBL" id="AE000666">
    <property type="protein sequence ID" value="AAB84760.1"/>
    <property type="status" value="ALT_INIT"/>
    <property type="molecule type" value="Genomic_DNA"/>
</dbReference>
<dbReference type="PIR" id="C47036">
    <property type="entry name" value="C47036"/>
</dbReference>
<dbReference type="RefSeq" id="WP_048060781.1">
    <property type="nucleotide sequence ID" value="NC_000916.1"/>
</dbReference>
<dbReference type="SMR" id="P50484"/>
<dbReference type="FunCoup" id="P50484">
    <property type="interactions" value="2"/>
</dbReference>
<dbReference type="STRING" id="187420.MTH_254"/>
<dbReference type="PaxDb" id="187420-MTH_254"/>
<dbReference type="EnsemblBacteria" id="AAB84760">
    <property type="protein sequence ID" value="AAB84760"/>
    <property type="gene ID" value="MTH_254"/>
</dbReference>
<dbReference type="GeneID" id="1470215"/>
<dbReference type="KEGG" id="mth:MTH_254"/>
<dbReference type="PATRIC" id="fig|187420.15.peg.223"/>
<dbReference type="HOGENOM" id="CLU_192667_0_0_2"/>
<dbReference type="InParanoid" id="P50484"/>
<dbReference type="Proteomes" id="UP000005223">
    <property type="component" value="Chromosome"/>
</dbReference>
<dbReference type="GO" id="GO:0005694">
    <property type="term" value="C:chromosome"/>
    <property type="evidence" value="ECO:0007669"/>
    <property type="project" value="UniProtKB-SubCell"/>
</dbReference>
<dbReference type="GO" id="GO:0005737">
    <property type="term" value="C:cytoplasm"/>
    <property type="evidence" value="ECO:0007669"/>
    <property type="project" value="UniProtKB-SubCell"/>
</dbReference>
<dbReference type="GO" id="GO:0003677">
    <property type="term" value="F:DNA binding"/>
    <property type="evidence" value="ECO:0007669"/>
    <property type="project" value="UniProtKB-KW"/>
</dbReference>
<dbReference type="GO" id="GO:0046982">
    <property type="term" value="F:protein heterodimerization activity"/>
    <property type="evidence" value="ECO:0007669"/>
    <property type="project" value="InterPro"/>
</dbReference>
<dbReference type="CDD" id="cd22909">
    <property type="entry name" value="HFD_archaea_histone-like"/>
    <property type="match status" value="1"/>
</dbReference>
<dbReference type="Gene3D" id="1.10.20.10">
    <property type="entry name" value="Histone, subunit A"/>
    <property type="match status" value="1"/>
</dbReference>
<dbReference type="InterPro" id="IPR050947">
    <property type="entry name" value="Archaeal_histone_HMF"/>
</dbReference>
<dbReference type="InterPro" id="IPR003958">
    <property type="entry name" value="CBFA_NFYB_domain"/>
</dbReference>
<dbReference type="InterPro" id="IPR009072">
    <property type="entry name" value="Histone-fold"/>
</dbReference>
<dbReference type="InterPro" id="IPR050004">
    <property type="entry name" value="HmfB-like"/>
</dbReference>
<dbReference type="InterPro" id="IPR004823">
    <property type="entry name" value="TAF_TATA-bd_Histone-like_dom"/>
</dbReference>
<dbReference type="NCBIfam" id="NF043032">
    <property type="entry name" value="archaea_histone"/>
    <property type="match status" value="1"/>
</dbReference>
<dbReference type="PANTHER" id="PTHR47828">
    <property type="entry name" value="ARCHAEAL HISTONE A"/>
    <property type="match status" value="1"/>
</dbReference>
<dbReference type="PANTHER" id="PTHR47828:SF1">
    <property type="entry name" value="ARCHAEAL HISTONE A"/>
    <property type="match status" value="1"/>
</dbReference>
<dbReference type="Pfam" id="PF00808">
    <property type="entry name" value="CBFD_NFYB_HMF"/>
    <property type="match status" value="1"/>
</dbReference>
<dbReference type="SMART" id="SM00803">
    <property type="entry name" value="TAF"/>
    <property type="match status" value="1"/>
</dbReference>
<dbReference type="SUPFAM" id="SSF47113">
    <property type="entry name" value="Histone-fold"/>
    <property type="match status" value="1"/>
</dbReference>
<accession>P50484</accession>
<name>HMTB_METTH</name>
<keyword id="KW-0158">Chromosome</keyword>
<keyword id="KW-0963">Cytoplasm</keyword>
<keyword id="KW-0238">DNA-binding</keyword>
<keyword id="KW-1185">Reference proteome</keyword>
<evidence type="ECO:0000250" key="1">
    <source>
        <dbReference type="UniProtKB" id="P19267"/>
    </source>
</evidence>
<evidence type="ECO:0000269" key="2">
    <source>
    </source>
</evidence>
<evidence type="ECO:0000303" key="3">
    <source>
    </source>
</evidence>
<evidence type="ECO:0000305" key="4"/>
<evidence type="ECO:0000305" key="5">
    <source>
    </source>
</evidence>
<protein>
    <recommendedName>
        <fullName evidence="3">DNA-binding protein HMt-2</fullName>
    </recommendedName>
    <alternativeName>
        <fullName>Archaeal histone A</fullName>
    </alternativeName>
</protein>
<comment type="function">
    <text evidence="2">Binds and compact DNA (95 to 150 base pairs) to form nucleosome-like structures that contain positive DNA supercoils.</text>
</comment>
<comment type="subunit">
    <text evidence="1 2">Homodimer or heterodimer with HmtA1 or HmtA2 (PubMed:1459937). Dimers then assemble into higher oligomers, with the DNA wrapped around the protein core (By similarity).</text>
</comment>
<comment type="subcellular location">
    <subcellularLocation>
        <location evidence="5">Cytoplasm</location>
    </subcellularLocation>
    <subcellularLocation>
        <location evidence="5">Chromosome</location>
    </subcellularLocation>
</comment>
<comment type="similarity">
    <text evidence="4">Belongs to the archaeal histone HMF family.</text>
</comment>
<comment type="sequence caution" evidence="4">
    <conflict type="erroneous initiation">
        <sequence resource="EMBL-CDS" id="AAB84760"/>
    </conflict>
</comment>
<organism>
    <name type="scientific">Methanothermobacter thermautotrophicus (strain ATCC 29096 / DSM 1053 / JCM 10044 / NBRC 100330 / Delta H)</name>
    <name type="common">Methanobacterium thermoautotrophicum</name>
    <dbReference type="NCBI Taxonomy" id="187420"/>
    <lineage>
        <taxon>Archaea</taxon>
        <taxon>Methanobacteriati</taxon>
        <taxon>Methanobacteriota</taxon>
        <taxon>Methanomada group</taxon>
        <taxon>Methanobacteria</taxon>
        <taxon>Methanobacteriales</taxon>
        <taxon>Methanobacteriaceae</taxon>
        <taxon>Methanothermobacter</taxon>
    </lineage>
</organism>
<sequence length="67" mass="7149">MELPIAPIGRIIKNAGAEIVSDDAREALAKVLEAKGEEIAENAVKLAKHAGRKTVKASDIELAVKRM</sequence>
<reference key="1">
    <citation type="journal article" date="1992" name="J. Bacteriol.">
        <title>HMt, a histone-related protein from Methanobacterium thermoautotrophicum delta H.</title>
        <authorList>
            <person name="Tabassum R."/>
            <person name="Sandman K.M."/>
            <person name="Reeve J.N."/>
        </authorList>
    </citation>
    <scope>NUCLEOTIDE SEQUENCE [GENOMIC DNA]</scope>
    <scope>FUNCTION</scope>
    <scope>SUBCELLULAR LOCATION</scope>
    <scope>SUBUNIT</scope>
    <source>
        <strain>ATCC 29096 / DSM 1053 / JCM 10044 / NBRC 100330 / Delta H</strain>
    </source>
</reference>
<reference key="2">
    <citation type="journal article" date="1997" name="J. Bacteriol.">
        <title>Complete genome sequence of Methanobacterium thermoautotrophicum deltaH: functional analysis and comparative genomics.</title>
        <authorList>
            <person name="Smith D.R."/>
            <person name="Doucette-Stamm L.A."/>
            <person name="Deloughery C."/>
            <person name="Lee H.-M."/>
            <person name="Dubois J."/>
            <person name="Aldredge T."/>
            <person name="Bashirzadeh R."/>
            <person name="Blakely D."/>
            <person name="Cook R."/>
            <person name="Gilbert K."/>
            <person name="Harrison D."/>
            <person name="Hoang L."/>
            <person name="Keagle P."/>
            <person name="Lumm W."/>
            <person name="Pothier B."/>
            <person name="Qiu D."/>
            <person name="Spadafora R."/>
            <person name="Vicare R."/>
            <person name="Wang Y."/>
            <person name="Wierzbowski J."/>
            <person name="Gibson R."/>
            <person name="Jiwani N."/>
            <person name="Caruso A."/>
            <person name="Bush D."/>
            <person name="Safer H."/>
            <person name="Patwell D."/>
            <person name="Prabhakar S."/>
            <person name="McDougall S."/>
            <person name="Shimer G."/>
            <person name="Goyal A."/>
            <person name="Pietrovski S."/>
            <person name="Church G.M."/>
            <person name="Daniels C.J."/>
            <person name="Mao J.-I."/>
            <person name="Rice P."/>
            <person name="Noelling J."/>
            <person name="Reeve J.N."/>
        </authorList>
    </citation>
    <scope>NUCLEOTIDE SEQUENCE [LARGE SCALE GENOMIC DNA]</scope>
    <source>
        <strain>ATCC 29096 / DSM 1053 / JCM 10044 / NBRC 100330 / Delta H</strain>
    </source>
</reference>
<gene>
    <name evidence="3" type="primary">hmtB</name>
    <name type="ordered locus">MTH_254</name>
</gene>